<proteinExistence type="evidence at protein level"/>
<gene>
    <name type="primary">rga4</name>
    <name type="ORF">SPBC28E12.03</name>
</gene>
<sequence length="933" mass="104487">MNSGTTLHLDRLSLETPSERTCFCIKCWESVPSTSQVWFGGKCWHSDCFKCVNCNKKLDPSSEDFSQDDQKQIFCKLCVDICNGCSTPICEFNAVSNSQANHPCCSNCRAFINSNAFGKFKGQHYCLPCLRKQDEENQKAVMESASGFIPLRNIAQTAENTSLTGQNQGFQNPHFIASDSPSSVLSGRMQNTSSPTNSLRPQLKVQTNGYETPGDINSAKSYKDIQKDFLLKPKNSFVKTSPSPLANGPSFRSANASPFDSCDSFHSGSSIPIEPVSSRQSSVVNNNSVQQPVAYHAFVQSPTENGTLPQLPKNESVVNPPPLRRSSTMNYKSVSTTTSPSKYGYVSGRIALSPIHLRGALRDVTNKCNLKVPRNRNSLSNLDEYYVNGLESDETPTKARFPRYPTVFNKLDDKRLSSEPNGLKKRLTNSSNYEASPRAKSLNLSQVSLHQACEPEYNRSSLVRASDVFTSNVFDATEESANELAIRISELQAEVGTLLLEATSLASIIEQQTPVSPEAFKQELVADLNYRLDYLRKSFQPELSTLLLRRDALSTTVSKLQNAYSTVMEETAYLNVKNTELVSLNNQLERELAYLREQQHKKRTSSSFGIFNNDKKSNRTISTPSPRESFSRLQMVASSLGFRPKDNKDKESGGYNKRNSKIDLKKSFSKRFHWKRDSPHMSSTPSISEEHLASEEQEDFVPAVGHCKLCGKYSNELRAHYQDCVSSTIDRQYQSKKSESPVWALNPDDFDQNRLTLLRVPTLIVSCINFIESYGMDFEGLYRKSGATSQMKKIVALLRNEDTVLDPSEDISAVTSVFKQYLRNLPNPIITYDQYFPFITAANCASFQDKLDGFIMVIKSLPPAHAEILQLIIRHLARVAAYSHANRMTSKNLAVVFSPTLIRDPDNSRDVIDMTVKNYSLAFLIDHVHEVFA</sequence>
<keyword id="KW-0343">GTPase activation</keyword>
<keyword id="KW-0440">LIM domain</keyword>
<keyword id="KW-0479">Metal-binding</keyword>
<keyword id="KW-0597">Phosphoprotein</keyword>
<keyword id="KW-1185">Reference proteome</keyword>
<keyword id="KW-0677">Repeat</keyword>
<keyword id="KW-0862">Zinc</keyword>
<reference key="1">
    <citation type="journal article" date="2002" name="Nature">
        <title>The genome sequence of Schizosaccharomyces pombe.</title>
        <authorList>
            <person name="Wood V."/>
            <person name="Gwilliam R."/>
            <person name="Rajandream M.A."/>
            <person name="Lyne M.H."/>
            <person name="Lyne R."/>
            <person name="Stewart A."/>
            <person name="Sgouros J.G."/>
            <person name="Peat N."/>
            <person name="Hayles J."/>
            <person name="Baker S.G."/>
            <person name="Basham D."/>
            <person name="Bowman S."/>
            <person name="Brooks K."/>
            <person name="Brown D."/>
            <person name="Brown S."/>
            <person name="Chillingworth T."/>
            <person name="Churcher C.M."/>
            <person name="Collins M."/>
            <person name="Connor R."/>
            <person name="Cronin A."/>
            <person name="Davis P."/>
            <person name="Feltwell T."/>
            <person name="Fraser A."/>
            <person name="Gentles S."/>
            <person name="Goble A."/>
            <person name="Hamlin N."/>
            <person name="Harris D.E."/>
            <person name="Hidalgo J."/>
            <person name="Hodgson G."/>
            <person name="Holroyd S."/>
            <person name="Hornsby T."/>
            <person name="Howarth S."/>
            <person name="Huckle E.J."/>
            <person name="Hunt S."/>
            <person name="Jagels K."/>
            <person name="James K.D."/>
            <person name="Jones L."/>
            <person name="Jones M."/>
            <person name="Leather S."/>
            <person name="McDonald S."/>
            <person name="McLean J."/>
            <person name="Mooney P."/>
            <person name="Moule S."/>
            <person name="Mungall K.L."/>
            <person name="Murphy L.D."/>
            <person name="Niblett D."/>
            <person name="Odell C."/>
            <person name="Oliver K."/>
            <person name="O'Neil S."/>
            <person name="Pearson D."/>
            <person name="Quail M.A."/>
            <person name="Rabbinowitsch E."/>
            <person name="Rutherford K.M."/>
            <person name="Rutter S."/>
            <person name="Saunders D."/>
            <person name="Seeger K."/>
            <person name="Sharp S."/>
            <person name="Skelton J."/>
            <person name="Simmonds M.N."/>
            <person name="Squares R."/>
            <person name="Squares S."/>
            <person name="Stevens K."/>
            <person name="Taylor K."/>
            <person name="Taylor R.G."/>
            <person name="Tivey A."/>
            <person name="Walsh S.V."/>
            <person name="Warren T."/>
            <person name="Whitehead S."/>
            <person name="Woodward J.R."/>
            <person name="Volckaert G."/>
            <person name="Aert R."/>
            <person name="Robben J."/>
            <person name="Grymonprez B."/>
            <person name="Weltjens I."/>
            <person name="Vanstreels E."/>
            <person name="Rieger M."/>
            <person name="Schaefer M."/>
            <person name="Mueller-Auer S."/>
            <person name="Gabel C."/>
            <person name="Fuchs M."/>
            <person name="Duesterhoeft A."/>
            <person name="Fritzc C."/>
            <person name="Holzer E."/>
            <person name="Moestl D."/>
            <person name="Hilbert H."/>
            <person name="Borzym K."/>
            <person name="Langer I."/>
            <person name="Beck A."/>
            <person name="Lehrach H."/>
            <person name="Reinhardt R."/>
            <person name="Pohl T.M."/>
            <person name="Eger P."/>
            <person name="Zimmermann W."/>
            <person name="Wedler H."/>
            <person name="Wambutt R."/>
            <person name="Purnelle B."/>
            <person name="Goffeau A."/>
            <person name="Cadieu E."/>
            <person name="Dreano S."/>
            <person name="Gloux S."/>
            <person name="Lelaure V."/>
            <person name="Mottier S."/>
            <person name="Galibert F."/>
            <person name="Aves S.J."/>
            <person name="Xiang Z."/>
            <person name="Hunt C."/>
            <person name="Moore K."/>
            <person name="Hurst S.M."/>
            <person name="Lucas M."/>
            <person name="Rochet M."/>
            <person name="Gaillardin C."/>
            <person name="Tallada V.A."/>
            <person name="Garzon A."/>
            <person name="Thode G."/>
            <person name="Daga R.R."/>
            <person name="Cruzado L."/>
            <person name="Jimenez J."/>
            <person name="Sanchez M."/>
            <person name="del Rey F."/>
            <person name="Benito J."/>
            <person name="Dominguez A."/>
            <person name="Revuelta J.L."/>
            <person name="Moreno S."/>
            <person name="Armstrong J."/>
            <person name="Forsburg S.L."/>
            <person name="Cerutti L."/>
            <person name="Lowe T."/>
            <person name="McCombie W.R."/>
            <person name="Paulsen I."/>
            <person name="Potashkin J."/>
            <person name="Shpakovski G.V."/>
            <person name="Ussery D."/>
            <person name="Barrell B.G."/>
            <person name="Nurse P."/>
        </authorList>
    </citation>
    <scope>NUCLEOTIDE SEQUENCE [LARGE SCALE GENOMIC DNA]</scope>
    <source>
        <strain>972 / ATCC 24843</strain>
    </source>
</reference>
<reference key="2">
    <citation type="journal article" date="2001" name="Genes Cells">
        <title>Characterization of GTPase-activating proteins for the function of the Rho-family small GTPases in the fission yeast Schizosaccharomyces pombe.</title>
        <authorList>
            <person name="Nakano K."/>
            <person name="Mutoh T."/>
            <person name="Mabuchi I."/>
        </authorList>
    </citation>
    <scope>GENE NAME</scope>
</reference>
<reference key="3">
    <citation type="journal article" date="2008" name="J. Proteome Res.">
        <title>Phosphoproteome analysis of fission yeast.</title>
        <authorList>
            <person name="Wilson-Grady J.T."/>
            <person name="Villen J."/>
            <person name="Gygi S.P."/>
        </authorList>
    </citation>
    <scope>PHOSPHORYLATION [LARGE SCALE ANALYSIS] AT SER-353; SER-625; SER-738 AND SER-740</scope>
    <scope>IDENTIFICATION BY MASS SPECTROMETRY</scope>
</reference>
<evidence type="ECO:0000255" key="1">
    <source>
        <dbReference type="PROSITE-ProRule" id="PRU00125"/>
    </source>
</evidence>
<evidence type="ECO:0000255" key="2">
    <source>
        <dbReference type="PROSITE-ProRule" id="PRU00172"/>
    </source>
</evidence>
<evidence type="ECO:0000256" key="3">
    <source>
        <dbReference type="SAM" id="MobiDB-lite"/>
    </source>
</evidence>
<evidence type="ECO:0000269" key="4">
    <source>
    </source>
</evidence>
<evidence type="ECO:0000305" key="5"/>
<organism>
    <name type="scientific">Schizosaccharomyces pombe (strain 972 / ATCC 24843)</name>
    <name type="common">Fission yeast</name>
    <dbReference type="NCBI Taxonomy" id="284812"/>
    <lineage>
        <taxon>Eukaryota</taxon>
        <taxon>Fungi</taxon>
        <taxon>Dikarya</taxon>
        <taxon>Ascomycota</taxon>
        <taxon>Taphrinomycotina</taxon>
        <taxon>Schizosaccharomycetes</taxon>
        <taxon>Schizosaccharomycetales</taxon>
        <taxon>Schizosaccharomycetaceae</taxon>
        <taxon>Schizosaccharomyces</taxon>
    </lineage>
</organism>
<feature type="chain" id="PRO_0000075902" description="Probable Rho-type GTPase-activating protein 4">
    <location>
        <begin position="1"/>
        <end position="933"/>
    </location>
</feature>
<feature type="domain" description="LIM zinc-binding 1" evidence="1">
    <location>
        <begin position="22"/>
        <end position="80"/>
    </location>
</feature>
<feature type="domain" description="LIM zinc-binding 2" evidence="1">
    <location>
        <begin position="81"/>
        <end position="129"/>
    </location>
</feature>
<feature type="domain" description="Rho-GAP" evidence="2">
    <location>
        <begin position="753"/>
        <end position="932"/>
    </location>
</feature>
<feature type="region of interest" description="Disordered" evidence="3">
    <location>
        <begin position="181"/>
        <end position="200"/>
    </location>
</feature>
<feature type="region of interest" description="Disordered" evidence="3">
    <location>
        <begin position="304"/>
        <end position="338"/>
    </location>
</feature>
<feature type="region of interest" description="Disordered" evidence="3">
    <location>
        <begin position="415"/>
        <end position="435"/>
    </location>
</feature>
<feature type="region of interest" description="Disordered" evidence="3">
    <location>
        <begin position="605"/>
        <end position="628"/>
    </location>
</feature>
<feature type="region of interest" description="Disordered" evidence="3">
    <location>
        <begin position="641"/>
        <end position="660"/>
    </location>
</feature>
<feature type="compositionally biased region" description="Polar residues" evidence="3">
    <location>
        <begin position="325"/>
        <end position="338"/>
    </location>
</feature>
<feature type="compositionally biased region" description="Polar residues" evidence="3">
    <location>
        <begin position="619"/>
        <end position="628"/>
    </location>
</feature>
<feature type="compositionally biased region" description="Basic and acidic residues" evidence="3">
    <location>
        <begin position="643"/>
        <end position="652"/>
    </location>
</feature>
<feature type="site" description="Arginine finger; crucial for GTP hydrolysis by stabilizing the transition state" evidence="2">
    <location>
        <position position="783"/>
    </location>
</feature>
<feature type="modified residue" description="Phosphoserine" evidence="4">
    <location>
        <position position="353"/>
    </location>
</feature>
<feature type="modified residue" description="Phosphoserine" evidence="4">
    <location>
        <position position="625"/>
    </location>
</feature>
<feature type="modified residue" description="Phosphoserine" evidence="4">
    <location>
        <position position="738"/>
    </location>
</feature>
<feature type="modified residue" description="Phosphoserine" evidence="4">
    <location>
        <position position="740"/>
    </location>
</feature>
<name>RGA4_SCHPO</name>
<protein>
    <recommendedName>
        <fullName>Probable Rho-type GTPase-activating protein 4</fullName>
    </recommendedName>
</protein>
<dbReference type="EMBL" id="CU329671">
    <property type="protein sequence ID" value="CAA20650.2"/>
    <property type="molecule type" value="Genomic_DNA"/>
</dbReference>
<dbReference type="PIR" id="T40040">
    <property type="entry name" value="T40040"/>
</dbReference>
<dbReference type="RefSeq" id="NP_595756.1">
    <property type="nucleotide sequence ID" value="NM_001021656.2"/>
</dbReference>
<dbReference type="SMR" id="O74360"/>
<dbReference type="BioGRID" id="277119">
    <property type="interactions" value="19"/>
</dbReference>
<dbReference type="FunCoup" id="O74360">
    <property type="interactions" value="303"/>
</dbReference>
<dbReference type="STRING" id="284812.O74360"/>
<dbReference type="iPTMnet" id="O74360"/>
<dbReference type="PaxDb" id="4896-SPBC28E12.03.1"/>
<dbReference type="EnsemblFungi" id="SPBC28E12.03.1">
    <property type="protein sequence ID" value="SPBC28E12.03.1:pep"/>
    <property type="gene ID" value="SPBC28E12.03"/>
</dbReference>
<dbReference type="GeneID" id="2540593"/>
<dbReference type="KEGG" id="spo:2540593"/>
<dbReference type="PomBase" id="SPBC28E12.03">
    <property type="gene designation" value="rga4"/>
</dbReference>
<dbReference type="VEuPathDB" id="FungiDB:SPBC28E12.03"/>
<dbReference type="eggNOG" id="KOG1453">
    <property type="taxonomic scope" value="Eukaryota"/>
</dbReference>
<dbReference type="eggNOG" id="KOG1704">
    <property type="taxonomic scope" value="Eukaryota"/>
</dbReference>
<dbReference type="HOGENOM" id="CLU_309526_0_0_1"/>
<dbReference type="InParanoid" id="O74360"/>
<dbReference type="PhylomeDB" id="O74360"/>
<dbReference type="Reactome" id="R-SPO-9013148">
    <property type="pathway name" value="CDC42 GTPase cycle"/>
</dbReference>
<dbReference type="Reactome" id="R-SPO-9013405">
    <property type="pathway name" value="RHOD GTPase cycle"/>
</dbReference>
<dbReference type="Reactome" id="R-SPO-9013424">
    <property type="pathway name" value="RHOV GTPase cycle"/>
</dbReference>
<dbReference type="Reactome" id="R-SPO-9035034">
    <property type="pathway name" value="RHOF GTPase cycle"/>
</dbReference>
<dbReference type="PRO" id="PR:O74360"/>
<dbReference type="Proteomes" id="UP000002485">
    <property type="component" value="Chromosome II"/>
</dbReference>
<dbReference type="GO" id="GO:0005938">
    <property type="term" value="C:cell cortex"/>
    <property type="evidence" value="ECO:0000318"/>
    <property type="project" value="GO_Central"/>
</dbReference>
<dbReference type="GO" id="GO:0032153">
    <property type="term" value="C:cell division site"/>
    <property type="evidence" value="ECO:0000318"/>
    <property type="project" value="GO_Central"/>
</dbReference>
<dbReference type="GO" id="GO:0071944">
    <property type="term" value="C:cell periphery"/>
    <property type="evidence" value="ECO:0000314"/>
    <property type="project" value="PomBase"/>
</dbReference>
<dbReference type="GO" id="GO:0051286">
    <property type="term" value="C:cell tip"/>
    <property type="evidence" value="ECO:0000318"/>
    <property type="project" value="GO_Central"/>
</dbReference>
<dbReference type="GO" id="GO:0005737">
    <property type="term" value="C:cytoplasm"/>
    <property type="evidence" value="ECO:0000314"/>
    <property type="project" value="PomBase"/>
</dbReference>
<dbReference type="GO" id="GO:0097575">
    <property type="term" value="C:lateral cell cortex"/>
    <property type="evidence" value="ECO:0000314"/>
    <property type="project" value="PomBase"/>
</dbReference>
<dbReference type="GO" id="GO:0016328">
    <property type="term" value="C:lateral plasma membrane"/>
    <property type="evidence" value="ECO:0000269"/>
    <property type="project" value="PomBase"/>
</dbReference>
<dbReference type="GO" id="GO:0031097">
    <property type="term" value="C:medial cortex"/>
    <property type="evidence" value="ECO:0000314"/>
    <property type="project" value="PomBase"/>
</dbReference>
<dbReference type="GO" id="GO:0005886">
    <property type="term" value="C:plasma membrane"/>
    <property type="evidence" value="ECO:0000318"/>
    <property type="project" value="GO_Central"/>
</dbReference>
<dbReference type="GO" id="GO:0030427">
    <property type="term" value="C:site of polarized growth"/>
    <property type="evidence" value="ECO:0000318"/>
    <property type="project" value="GO_Central"/>
</dbReference>
<dbReference type="GO" id="GO:0005096">
    <property type="term" value="F:GTPase activator activity"/>
    <property type="evidence" value="ECO:0000314"/>
    <property type="project" value="PomBase"/>
</dbReference>
<dbReference type="GO" id="GO:0046872">
    <property type="term" value="F:metal ion binding"/>
    <property type="evidence" value="ECO:0007669"/>
    <property type="project" value="UniProtKB-KW"/>
</dbReference>
<dbReference type="GO" id="GO:0031267">
    <property type="term" value="F:small GTPase binding"/>
    <property type="evidence" value="ECO:0000353"/>
    <property type="project" value="PomBase"/>
</dbReference>
<dbReference type="GO" id="GO:0061245">
    <property type="term" value="P:establishment or maintenance of bipolar cell polarity"/>
    <property type="evidence" value="ECO:0000316"/>
    <property type="project" value="PomBase"/>
</dbReference>
<dbReference type="GO" id="GO:1903138">
    <property type="term" value="P:negative regulation of cell integrity MAPK cascade"/>
    <property type="evidence" value="ECO:0000315"/>
    <property type="project" value="PomBase"/>
</dbReference>
<dbReference type="GO" id="GO:0061173">
    <property type="term" value="P:positive regulation of establishment of bipolar cell polarity"/>
    <property type="evidence" value="ECO:0000315"/>
    <property type="project" value="PomBase"/>
</dbReference>
<dbReference type="GO" id="GO:2000784">
    <property type="term" value="P:positive regulation of establishment of cell polarity regulating cell shape"/>
    <property type="evidence" value="ECO:0000269"/>
    <property type="project" value="PomBase"/>
</dbReference>
<dbReference type="GO" id="GO:0032231">
    <property type="term" value="P:regulation of actin filament bundle assembly"/>
    <property type="evidence" value="ECO:0000315"/>
    <property type="project" value="PomBase"/>
</dbReference>
<dbReference type="GO" id="GO:1903338">
    <property type="term" value="P:regulation of cell wall organization or biogenesis"/>
    <property type="evidence" value="ECO:0000315"/>
    <property type="project" value="PomBase"/>
</dbReference>
<dbReference type="GO" id="GO:0007264">
    <property type="term" value="P:small GTPase-mediated signal transduction"/>
    <property type="evidence" value="ECO:0000318"/>
    <property type="project" value="GO_Central"/>
</dbReference>
<dbReference type="CDD" id="cd08368">
    <property type="entry name" value="LIM"/>
    <property type="match status" value="1"/>
</dbReference>
<dbReference type="CDD" id="cd00159">
    <property type="entry name" value="RhoGAP"/>
    <property type="match status" value="1"/>
</dbReference>
<dbReference type="Gene3D" id="2.10.110.10">
    <property type="entry name" value="Cysteine Rich Protein"/>
    <property type="match status" value="1"/>
</dbReference>
<dbReference type="Gene3D" id="1.10.555.10">
    <property type="entry name" value="Rho GTPase activation protein"/>
    <property type="match status" value="1"/>
</dbReference>
<dbReference type="InterPro" id="IPR050729">
    <property type="entry name" value="Rho-GAP"/>
</dbReference>
<dbReference type="InterPro" id="IPR008936">
    <property type="entry name" value="Rho_GTPase_activation_prot"/>
</dbReference>
<dbReference type="InterPro" id="IPR000198">
    <property type="entry name" value="RhoGAP_dom"/>
</dbReference>
<dbReference type="InterPro" id="IPR001781">
    <property type="entry name" value="Znf_LIM"/>
</dbReference>
<dbReference type="PANTHER" id="PTHR23176:SF128">
    <property type="entry name" value="RHO GTPASE-ACTIVATING PROTEIN RGD1"/>
    <property type="match status" value="1"/>
</dbReference>
<dbReference type="PANTHER" id="PTHR23176">
    <property type="entry name" value="RHO/RAC/CDC GTPASE-ACTIVATING PROTEIN"/>
    <property type="match status" value="1"/>
</dbReference>
<dbReference type="Pfam" id="PF00412">
    <property type="entry name" value="LIM"/>
    <property type="match status" value="1"/>
</dbReference>
<dbReference type="Pfam" id="PF00620">
    <property type="entry name" value="RhoGAP"/>
    <property type="match status" value="1"/>
</dbReference>
<dbReference type="SMART" id="SM00132">
    <property type="entry name" value="LIM"/>
    <property type="match status" value="2"/>
</dbReference>
<dbReference type="SMART" id="SM00324">
    <property type="entry name" value="RhoGAP"/>
    <property type="match status" value="1"/>
</dbReference>
<dbReference type="SUPFAM" id="SSF48350">
    <property type="entry name" value="GTPase activation domain, GAP"/>
    <property type="match status" value="1"/>
</dbReference>
<dbReference type="PROSITE" id="PS00478">
    <property type="entry name" value="LIM_DOMAIN_1"/>
    <property type="match status" value="1"/>
</dbReference>
<dbReference type="PROSITE" id="PS50023">
    <property type="entry name" value="LIM_DOMAIN_2"/>
    <property type="match status" value="1"/>
</dbReference>
<dbReference type="PROSITE" id="PS50238">
    <property type="entry name" value="RHOGAP"/>
    <property type="match status" value="1"/>
</dbReference>
<accession>O74360</accession>
<comment type="function">
    <text evidence="5">GTPase-activating protein for Rho-type proteins.</text>
</comment>